<organism>
    <name type="scientific">Acinetobacter baumannii (strain SDF)</name>
    <dbReference type="NCBI Taxonomy" id="509170"/>
    <lineage>
        <taxon>Bacteria</taxon>
        <taxon>Pseudomonadati</taxon>
        <taxon>Pseudomonadota</taxon>
        <taxon>Gammaproteobacteria</taxon>
        <taxon>Moraxellales</taxon>
        <taxon>Moraxellaceae</taxon>
        <taxon>Acinetobacter</taxon>
        <taxon>Acinetobacter calcoaceticus/baumannii complex</taxon>
    </lineage>
</organism>
<accession>B0VP57</accession>
<feature type="chain" id="PRO_1000127481" description="D-aminoacyl-tRNA deacylase">
    <location>
        <begin position="1"/>
        <end position="144"/>
    </location>
</feature>
<feature type="short sequence motif" description="Gly-cisPro motif, important for rejection of L-amino acids" evidence="1">
    <location>
        <begin position="137"/>
        <end position="138"/>
    </location>
</feature>
<keyword id="KW-0963">Cytoplasm</keyword>
<keyword id="KW-0378">Hydrolase</keyword>
<keyword id="KW-0694">RNA-binding</keyword>
<keyword id="KW-0820">tRNA-binding</keyword>
<gene>
    <name evidence="1" type="primary">dtd</name>
    <name type="ordered locus">ABSDF3531</name>
</gene>
<sequence length="144" mass="16002">MRALIQRVLEAKVEVDGQTTGEIKKGLLVFLGLGKEDTLEKGQKLIDKILKYRIFDDEQGKMGWNVSQANGGVLLVSQFTLMAQTQKGLRPDFGPAMPPSDAKALYEQLVEYTRSQFENVQTGIFAADMKVHLINDGPVTFNLT</sequence>
<protein>
    <recommendedName>
        <fullName evidence="1">D-aminoacyl-tRNA deacylase</fullName>
        <shortName evidence="1">DTD</shortName>
        <ecNumber evidence="1">3.1.1.96</ecNumber>
    </recommendedName>
    <alternativeName>
        <fullName evidence="1">Gly-tRNA(Ala) deacylase</fullName>
    </alternativeName>
</protein>
<evidence type="ECO:0000255" key="1">
    <source>
        <dbReference type="HAMAP-Rule" id="MF_00518"/>
    </source>
</evidence>
<reference key="1">
    <citation type="journal article" date="2008" name="PLoS ONE">
        <title>Comparative analysis of Acinetobacters: three genomes for three lifestyles.</title>
        <authorList>
            <person name="Vallenet D."/>
            <person name="Nordmann P."/>
            <person name="Barbe V."/>
            <person name="Poirel L."/>
            <person name="Mangenot S."/>
            <person name="Bataille E."/>
            <person name="Dossat C."/>
            <person name="Gas S."/>
            <person name="Kreimeyer A."/>
            <person name="Lenoble P."/>
            <person name="Oztas S."/>
            <person name="Poulain J."/>
            <person name="Segurens B."/>
            <person name="Robert C."/>
            <person name="Abergel C."/>
            <person name="Claverie J.-M."/>
            <person name="Raoult D."/>
            <person name="Medigue C."/>
            <person name="Weissenbach J."/>
            <person name="Cruveiller S."/>
        </authorList>
    </citation>
    <scope>NUCLEOTIDE SEQUENCE [LARGE SCALE GENOMIC DNA]</scope>
    <source>
        <strain>SDF</strain>
    </source>
</reference>
<proteinExistence type="inferred from homology"/>
<comment type="function">
    <text evidence="1">An aminoacyl-tRNA editing enzyme that deacylates mischarged D-aminoacyl-tRNAs. Also deacylates mischarged glycyl-tRNA(Ala), protecting cells against glycine mischarging by AlaRS. Acts via tRNA-based rather than protein-based catalysis; rejects L-amino acids rather than detecting D-amino acids in the active site. By recycling D-aminoacyl-tRNA to D-amino acids and free tRNA molecules, this enzyme counteracts the toxicity associated with the formation of D-aminoacyl-tRNA entities in vivo and helps enforce protein L-homochirality.</text>
</comment>
<comment type="catalytic activity">
    <reaction evidence="1">
        <text>glycyl-tRNA(Ala) + H2O = tRNA(Ala) + glycine + H(+)</text>
        <dbReference type="Rhea" id="RHEA:53744"/>
        <dbReference type="Rhea" id="RHEA-COMP:9657"/>
        <dbReference type="Rhea" id="RHEA-COMP:13640"/>
        <dbReference type="ChEBI" id="CHEBI:15377"/>
        <dbReference type="ChEBI" id="CHEBI:15378"/>
        <dbReference type="ChEBI" id="CHEBI:57305"/>
        <dbReference type="ChEBI" id="CHEBI:78442"/>
        <dbReference type="ChEBI" id="CHEBI:78522"/>
        <dbReference type="EC" id="3.1.1.96"/>
    </reaction>
</comment>
<comment type="catalytic activity">
    <reaction evidence="1">
        <text>a D-aminoacyl-tRNA + H2O = a tRNA + a D-alpha-amino acid + H(+)</text>
        <dbReference type="Rhea" id="RHEA:13953"/>
        <dbReference type="Rhea" id="RHEA-COMP:10123"/>
        <dbReference type="Rhea" id="RHEA-COMP:10124"/>
        <dbReference type="ChEBI" id="CHEBI:15377"/>
        <dbReference type="ChEBI" id="CHEBI:15378"/>
        <dbReference type="ChEBI" id="CHEBI:59871"/>
        <dbReference type="ChEBI" id="CHEBI:78442"/>
        <dbReference type="ChEBI" id="CHEBI:79333"/>
        <dbReference type="EC" id="3.1.1.96"/>
    </reaction>
</comment>
<comment type="subunit">
    <text evidence="1">Homodimer.</text>
</comment>
<comment type="subcellular location">
    <subcellularLocation>
        <location evidence="1">Cytoplasm</location>
    </subcellularLocation>
</comment>
<comment type="domain">
    <text evidence="1">A Gly-cisPro motif from one monomer fits into the active site of the other monomer to allow specific chiral rejection of L-amino acids.</text>
</comment>
<comment type="similarity">
    <text evidence="1">Belongs to the DTD family.</text>
</comment>
<dbReference type="EC" id="3.1.1.96" evidence="1"/>
<dbReference type="EMBL" id="CU468230">
    <property type="protein sequence ID" value="CAP02793.1"/>
    <property type="molecule type" value="Genomic_DNA"/>
</dbReference>
<dbReference type="SMR" id="B0VP57"/>
<dbReference type="KEGG" id="abm:ABSDF3531"/>
<dbReference type="HOGENOM" id="CLU_076901_1_1_6"/>
<dbReference type="Proteomes" id="UP000001741">
    <property type="component" value="Chromosome"/>
</dbReference>
<dbReference type="GO" id="GO:0005737">
    <property type="term" value="C:cytoplasm"/>
    <property type="evidence" value="ECO:0007669"/>
    <property type="project" value="UniProtKB-SubCell"/>
</dbReference>
<dbReference type="GO" id="GO:0051500">
    <property type="term" value="F:D-tyrosyl-tRNA(Tyr) deacylase activity"/>
    <property type="evidence" value="ECO:0007669"/>
    <property type="project" value="TreeGrafter"/>
</dbReference>
<dbReference type="GO" id="GO:0106026">
    <property type="term" value="F:Gly-tRNA(Ala) deacylase activity"/>
    <property type="evidence" value="ECO:0007669"/>
    <property type="project" value="UniProtKB-UniRule"/>
</dbReference>
<dbReference type="GO" id="GO:0043908">
    <property type="term" value="F:Ser(Gly)-tRNA(Ala) hydrolase activity"/>
    <property type="evidence" value="ECO:0007669"/>
    <property type="project" value="UniProtKB-UniRule"/>
</dbReference>
<dbReference type="GO" id="GO:0000049">
    <property type="term" value="F:tRNA binding"/>
    <property type="evidence" value="ECO:0007669"/>
    <property type="project" value="UniProtKB-UniRule"/>
</dbReference>
<dbReference type="GO" id="GO:0019478">
    <property type="term" value="P:D-amino acid catabolic process"/>
    <property type="evidence" value="ECO:0007669"/>
    <property type="project" value="UniProtKB-UniRule"/>
</dbReference>
<dbReference type="CDD" id="cd00563">
    <property type="entry name" value="Dtyr_deacylase"/>
    <property type="match status" value="1"/>
</dbReference>
<dbReference type="FunFam" id="3.50.80.10:FF:000001">
    <property type="entry name" value="D-aminoacyl-tRNA deacylase"/>
    <property type="match status" value="1"/>
</dbReference>
<dbReference type="Gene3D" id="3.50.80.10">
    <property type="entry name" value="D-tyrosyl-tRNA(Tyr) deacylase"/>
    <property type="match status" value="1"/>
</dbReference>
<dbReference type="HAMAP" id="MF_00518">
    <property type="entry name" value="Deacylase_Dtd"/>
    <property type="match status" value="1"/>
</dbReference>
<dbReference type="InterPro" id="IPR003732">
    <property type="entry name" value="Daa-tRNA_deacyls_DTD"/>
</dbReference>
<dbReference type="InterPro" id="IPR023509">
    <property type="entry name" value="DTD-like_sf"/>
</dbReference>
<dbReference type="NCBIfam" id="TIGR00256">
    <property type="entry name" value="D-aminoacyl-tRNA deacylase"/>
    <property type="match status" value="1"/>
</dbReference>
<dbReference type="PANTHER" id="PTHR10472:SF5">
    <property type="entry name" value="D-AMINOACYL-TRNA DEACYLASE 1"/>
    <property type="match status" value="1"/>
</dbReference>
<dbReference type="PANTHER" id="PTHR10472">
    <property type="entry name" value="D-TYROSYL-TRNA TYR DEACYLASE"/>
    <property type="match status" value="1"/>
</dbReference>
<dbReference type="Pfam" id="PF02580">
    <property type="entry name" value="Tyr_Deacylase"/>
    <property type="match status" value="1"/>
</dbReference>
<dbReference type="SUPFAM" id="SSF69500">
    <property type="entry name" value="DTD-like"/>
    <property type="match status" value="1"/>
</dbReference>
<name>DTD_ACIBS</name>